<comment type="catalytic activity">
    <reaction evidence="1">
        <text>1-(5-phospho-beta-D-ribosyl)-ATP + H2O = 1-(5-phospho-beta-D-ribosyl)-5'-AMP + diphosphate + H(+)</text>
        <dbReference type="Rhea" id="RHEA:22828"/>
        <dbReference type="ChEBI" id="CHEBI:15377"/>
        <dbReference type="ChEBI" id="CHEBI:15378"/>
        <dbReference type="ChEBI" id="CHEBI:33019"/>
        <dbReference type="ChEBI" id="CHEBI:59457"/>
        <dbReference type="ChEBI" id="CHEBI:73183"/>
        <dbReference type="EC" id="3.6.1.31"/>
    </reaction>
</comment>
<comment type="pathway">
    <text evidence="1">Amino-acid biosynthesis; L-histidine biosynthesis; L-histidine from 5-phospho-alpha-D-ribose 1-diphosphate: step 2/9.</text>
</comment>
<comment type="subcellular location">
    <subcellularLocation>
        <location evidence="1">Cytoplasm</location>
    </subcellularLocation>
</comment>
<comment type="similarity">
    <text evidence="1">Belongs to the PRA-PH family.</text>
</comment>
<protein>
    <recommendedName>
        <fullName evidence="1">Phosphoribosyl-ATP pyrophosphatase</fullName>
        <shortName evidence="1">PRA-PH</shortName>
        <ecNumber evidence="1">3.6.1.31</ecNumber>
    </recommendedName>
</protein>
<gene>
    <name evidence="1" type="primary">hisE</name>
    <name type="ordered locus">Smed_3258</name>
</gene>
<feature type="chain" id="PRO_1000063384" description="Phosphoribosyl-ATP pyrophosphatase">
    <location>
        <begin position="1"/>
        <end position="107"/>
    </location>
</feature>
<name>HIS2_SINMW</name>
<organism>
    <name type="scientific">Sinorhizobium medicae (strain WSM419)</name>
    <name type="common">Ensifer medicae</name>
    <dbReference type="NCBI Taxonomy" id="366394"/>
    <lineage>
        <taxon>Bacteria</taxon>
        <taxon>Pseudomonadati</taxon>
        <taxon>Pseudomonadota</taxon>
        <taxon>Alphaproteobacteria</taxon>
        <taxon>Hyphomicrobiales</taxon>
        <taxon>Rhizobiaceae</taxon>
        <taxon>Sinorhizobium/Ensifer group</taxon>
        <taxon>Sinorhizobium</taxon>
    </lineage>
</organism>
<evidence type="ECO:0000255" key="1">
    <source>
        <dbReference type="HAMAP-Rule" id="MF_01020"/>
    </source>
</evidence>
<proteinExistence type="inferred from homology"/>
<accession>A6UEK2</accession>
<keyword id="KW-0028">Amino-acid biosynthesis</keyword>
<keyword id="KW-0067">ATP-binding</keyword>
<keyword id="KW-0963">Cytoplasm</keyword>
<keyword id="KW-0368">Histidine biosynthesis</keyword>
<keyword id="KW-0378">Hydrolase</keyword>
<keyword id="KW-0547">Nucleotide-binding</keyword>
<dbReference type="EC" id="3.6.1.31" evidence="1"/>
<dbReference type="EMBL" id="CP000738">
    <property type="protein sequence ID" value="ABR62082.1"/>
    <property type="molecule type" value="Genomic_DNA"/>
</dbReference>
<dbReference type="RefSeq" id="WP_012067463.1">
    <property type="nucleotide sequence ID" value="NC_009636.1"/>
</dbReference>
<dbReference type="RefSeq" id="YP_001328917.1">
    <property type="nucleotide sequence ID" value="NC_009636.1"/>
</dbReference>
<dbReference type="SMR" id="A6UEK2"/>
<dbReference type="STRING" id="366394.Smed_3258"/>
<dbReference type="KEGG" id="smd:Smed_3258"/>
<dbReference type="PATRIC" id="fig|366394.8.peg.6498"/>
<dbReference type="eggNOG" id="COG0140">
    <property type="taxonomic scope" value="Bacteria"/>
</dbReference>
<dbReference type="HOGENOM" id="CLU_123337_1_1_5"/>
<dbReference type="OrthoDB" id="9814738at2"/>
<dbReference type="UniPathway" id="UPA00031">
    <property type="reaction ID" value="UER00007"/>
</dbReference>
<dbReference type="Proteomes" id="UP000001108">
    <property type="component" value="Chromosome"/>
</dbReference>
<dbReference type="GO" id="GO:0005737">
    <property type="term" value="C:cytoplasm"/>
    <property type="evidence" value="ECO:0007669"/>
    <property type="project" value="UniProtKB-SubCell"/>
</dbReference>
<dbReference type="GO" id="GO:0005524">
    <property type="term" value="F:ATP binding"/>
    <property type="evidence" value="ECO:0007669"/>
    <property type="project" value="UniProtKB-KW"/>
</dbReference>
<dbReference type="GO" id="GO:0004636">
    <property type="term" value="F:phosphoribosyl-ATP diphosphatase activity"/>
    <property type="evidence" value="ECO:0007669"/>
    <property type="project" value="UniProtKB-UniRule"/>
</dbReference>
<dbReference type="GO" id="GO:0000105">
    <property type="term" value="P:L-histidine biosynthetic process"/>
    <property type="evidence" value="ECO:0007669"/>
    <property type="project" value="UniProtKB-UniRule"/>
</dbReference>
<dbReference type="CDD" id="cd11534">
    <property type="entry name" value="NTP-PPase_HisIE_like"/>
    <property type="match status" value="1"/>
</dbReference>
<dbReference type="Gene3D" id="1.10.287.1080">
    <property type="entry name" value="MazG-like"/>
    <property type="match status" value="1"/>
</dbReference>
<dbReference type="HAMAP" id="MF_01020">
    <property type="entry name" value="HisE"/>
    <property type="match status" value="1"/>
</dbReference>
<dbReference type="InterPro" id="IPR008179">
    <property type="entry name" value="HisE"/>
</dbReference>
<dbReference type="InterPro" id="IPR021130">
    <property type="entry name" value="PRib-ATP_PPHydrolase-like"/>
</dbReference>
<dbReference type="NCBIfam" id="TIGR03188">
    <property type="entry name" value="histidine_hisI"/>
    <property type="match status" value="1"/>
</dbReference>
<dbReference type="NCBIfam" id="NF001611">
    <property type="entry name" value="PRK00400.1-3"/>
    <property type="match status" value="1"/>
</dbReference>
<dbReference type="NCBIfam" id="NF001613">
    <property type="entry name" value="PRK00400.1-5"/>
    <property type="match status" value="1"/>
</dbReference>
<dbReference type="PANTHER" id="PTHR42945">
    <property type="entry name" value="HISTIDINE BIOSYNTHESIS BIFUNCTIONAL PROTEIN"/>
    <property type="match status" value="1"/>
</dbReference>
<dbReference type="PANTHER" id="PTHR42945:SF1">
    <property type="entry name" value="HISTIDINE BIOSYNTHESIS BIFUNCTIONAL PROTEIN HIS7"/>
    <property type="match status" value="1"/>
</dbReference>
<dbReference type="Pfam" id="PF01503">
    <property type="entry name" value="PRA-PH"/>
    <property type="match status" value="1"/>
</dbReference>
<dbReference type="SUPFAM" id="SSF101386">
    <property type="entry name" value="all-alpha NTP pyrophosphatases"/>
    <property type="match status" value="1"/>
</dbReference>
<sequence length="107" mass="11660">MTEFTLSDLEKIVATRARAAPEESWTAKLVAAGQKKAAKKLGEEAVETVIAAIGDDRKNLVDESADLLYHLMVVLNIAAIPLQDVMSELARRTSQSGLQEKANRQNP</sequence>
<reference key="1">
    <citation type="submission" date="2007-06" db="EMBL/GenBank/DDBJ databases">
        <title>Complete sequence of Sinorhizobium medicae WSM419 chromosome.</title>
        <authorList>
            <consortium name="US DOE Joint Genome Institute"/>
            <person name="Copeland A."/>
            <person name="Lucas S."/>
            <person name="Lapidus A."/>
            <person name="Barry K."/>
            <person name="Glavina del Rio T."/>
            <person name="Dalin E."/>
            <person name="Tice H."/>
            <person name="Pitluck S."/>
            <person name="Chain P."/>
            <person name="Malfatti S."/>
            <person name="Shin M."/>
            <person name="Vergez L."/>
            <person name="Schmutz J."/>
            <person name="Larimer F."/>
            <person name="Land M."/>
            <person name="Hauser L."/>
            <person name="Kyrpides N."/>
            <person name="Mikhailova N."/>
            <person name="Reeve W.G."/>
            <person name="Richardson P."/>
        </authorList>
    </citation>
    <scope>NUCLEOTIDE SEQUENCE [LARGE SCALE GENOMIC DNA]</scope>
    <source>
        <strain>WSM419</strain>
    </source>
</reference>